<comment type="function">
    <text evidence="1">Dephosphorylates Wzc. Required for the extracellular polysaccharide colanic acid synthesis. Probably involved in the export of colanic acid from the cell to medium. Involved in protection of cells against contact-dependent growth inhibition (CDI).</text>
</comment>
<comment type="catalytic activity">
    <reaction>
        <text>O-phospho-L-tyrosyl-[protein] + H2O = L-tyrosyl-[protein] + phosphate</text>
        <dbReference type="Rhea" id="RHEA:10684"/>
        <dbReference type="Rhea" id="RHEA-COMP:10136"/>
        <dbReference type="Rhea" id="RHEA-COMP:20101"/>
        <dbReference type="ChEBI" id="CHEBI:15377"/>
        <dbReference type="ChEBI" id="CHEBI:43474"/>
        <dbReference type="ChEBI" id="CHEBI:46858"/>
        <dbReference type="ChEBI" id="CHEBI:61978"/>
        <dbReference type="EC" id="3.1.3.48"/>
    </reaction>
</comment>
<comment type="pathway">
    <text>Glycan metabolism; exopolysaccharide biosynthesis.</text>
</comment>
<comment type="similarity">
    <text evidence="3">Belongs to the low molecular weight phosphotyrosine protein phosphatase family.</text>
</comment>
<feature type="chain" id="PRO_0000046574" description="Low molecular weight protein-tyrosine-phosphatase Wzb">
    <location>
        <begin position="1"/>
        <end position="149"/>
    </location>
</feature>
<feature type="active site" description="Nucleophile" evidence="2">
    <location>
        <position position="9"/>
    </location>
</feature>
<feature type="active site" evidence="2">
    <location>
        <position position="15"/>
    </location>
</feature>
<feature type="active site" description="Proton donor" evidence="2">
    <location>
        <position position="115"/>
    </location>
</feature>
<keyword id="KW-0270">Exopolysaccharide synthesis</keyword>
<keyword id="KW-0378">Hydrolase</keyword>
<keyword id="KW-0904">Protein phosphatase</keyword>
<name>WZB_SALTI</name>
<reference key="1">
    <citation type="journal article" date="2001" name="Nature">
        <title>Complete genome sequence of a multiple drug resistant Salmonella enterica serovar Typhi CT18.</title>
        <authorList>
            <person name="Parkhill J."/>
            <person name="Dougan G."/>
            <person name="James K.D."/>
            <person name="Thomson N.R."/>
            <person name="Pickard D."/>
            <person name="Wain J."/>
            <person name="Churcher C.M."/>
            <person name="Mungall K.L."/>
            <person name="Bentley S.D."/>
            <person name="Holden M.T.G."/>
            <person name="Sebaihia M."/>
            <person name="Baker S."/>
            <person name="Basham D."/>
            <person name="Brooks K."/>
            <person name="Chillingworth T."/>
            <person name="Connerton P."/>
            <person name="Cronin A."/>
            <person name="Davis P."/>
            <person name="Davies R.M."/>
            <person name="Dowd L."/>
            <person name="White N."/>
            <person name="Farrar J."/>
            <person name="Feltwell T."/>
            <person name="Hamlin N."/>
            <person name="Haque A."/>
            <person name="Hien T.T."/>
            <person name="Holroyd S."/>
            <person name="Jagels K."/>
            <person name="Krogh A."/>
            <person name="Larsen T.S."/>
            <person name="Leather S."/>
            <person name="Moule S."/>
            <person name="O'Gaora P."/>
            <person name="Parry C."/>
            <person name="Quail M.A."/>
            <person name="Rutherford K.M."/>
            <person name="Simmonds M."/>
            <person name="Skelton J."/>
            <person name="Stevens K."/>
            <person name="Whitehead S."/>
            <person name="Barrell B.G."/>
        </authorList>
    </citation>
    <scope>NUCLEOTIDE SEQUENCE [LARGE SCALE GENOMIC DNA]</scope>
    <source>
        <strain>CT18</strain>
    </source>
</reference>
<reference key="2">
    <citation type="journal article" date="2003" name="J. Bacteriol.">
        <title>Comparative genomics of Salmonella enterica serovar Typhi strains Ty2 and CT18.</title>
        <authorList>
            <person name="Deng W."/>
            <person name="Liou S.-R."/>
            <person name="Plunkett G. III"/>
            <person name="Mayhew G.F."/>
            <person name="Rose D.J."/>
            <person name="Burland V."/>
            <person name="Kodoyianni V."/>
            <person name="Schwartz D.C."/>
            <person name="Blattner F.R."/>
        </authorList>
    </citation>
    <scope>NUCLEOTIDE SEQUENCE [LARGE SCALE GENOMIC DNA]</scope>
    <source>
        <strain>ATCC 700931 / Ty2</strain>
    </source>
</reference>
<gene>
    <name type="primary">wzb</name>
    <name type="ordered locus">STY2330</name>
    <name type="ordered locus">t0755</name>
</gene>
<organism>
    <name type="scientific">Salmonella typhi</name>
    <dbReference type="NCBI Taxonomy" id="90370"/>
    <lineage>
        <taxon>Bacteria</taxon>
        <taxon>Pseudomonadati</taxon>
        <taxon>Pseudomonadota</taxon>
        <taxon>Gammaproteobacteria</taxon>
        <taxon>Enterobacterales</taxon>
        <taxon>Enterobacteriaceae</taxon>
        <taxon>Salmonella</taxon>
    </lineage>
</organism>
<accession>Q8Z5G5</accession>
<protein>
    <recommendedName>
        <fullName>Low molecular weight protein-tyrosine-phosphatase Wzb</fullName>
        <ecNumber>3.1.3.48</ecNumber>
    </recommendedName>
</protein>
<dbReference type="EC" id="3.1.3.48"/>
<dbReference type="EMBL" id="AL513382">
    <property type="protein sequence ID" value="CAD02480.1"/>
    <property type="molecule type" value="Genomic_DNA"/>
</dbReference>
<dbReference type="EMBL" id="AE014613">
    <property type="protein sequence ID" value="AAO68448.1"/>
    <property type="molecule type" value="Genomic_DNA"/>
</dbReference>
<dbReference type="RefSeq" id="NP_456663.1">
    <property type="nucleotide sequence ID" value="NC_003198.1"/>
</dbReference>
<dbReference type="RefSeq" id="WP_000482225.1">
    <property type="nucleotide sequence ID" value="NZ_WSUR01000002.1"/>
</dbReference>
<dbReference type="SMR" id="Q8Z5G5"/>
<dbReference type="STRING" id="220341.gene:17586235"/>
<dbReference type="KEGG" id="stt:t0755"/>
<dbReference type="KEGG" id="sty:STY2330"/>
<dbReference type="PATRIC" id="fig|220341.7.peg.2351"/>
<dbReference type="eggNOG" id="COG0394">
    <property type="taxonomic scope" value="Bacteria"/>
</dbReference>
<dbReference type="HOGENOM" id="CLU_071415_1_1_6"/>
<dbReference type="OMA" id="YQQVTRF"/>
<dbReference type="OrthoDB" id="9784339at2"/>
<dbReference type="UniPathway" id="UPA00631"/>
<dbReference type="Proteomes" id="UP000000541">
    <property type="component" value="Chromosome"/>
</dbReference>
<dbReference type="Proteomes" id="UP000002670">
    <property type="component" value="Chromosome"/>
</dbReference>
<dbReference type="GO" id="GO:0004725">
    <property type="term" value="F:protein tyrosine phosphatase activity"/>
    <property type="evidence" value="ECO:0007669"/>
    <property type="project" value="UniProtKB-EC"/>
</dbReference>
<dbReference type="GO" id="GO:0000271">
    <property type="term" value="P:polysaccharide biosynthetic process"/>
    <property type="evidence" value="ECO:0007669"/>
    <property type="project" value="UniProtKB-KW"/>
</dbReference>
<dbReference type="CDD" id="cd16343">
    <property type="entry name" value="LMWPTP"/>
    <property type="match status" value="1"/>
</dbReference>
<dbReference type="FunFam" id="3.40.50.2300:FF:000041">
    <property type="entry name" value="Low molecular weight protein-tyrosine-phosphatase"/>
    <property type="match status" value="1"/>
</dbReference>
<dbReference type="Gene3D" id="3.40.50.2300">
    <property type="match status" value="1"/>
</dbReference>
<dbReference type="InterPro" id="IPR050438">
    <property type="entry name" value="LMW_PTPase"/>
</dbReference>
<dbReference type="InterPro" id="IPR023485">
    <property type="entry name" value="Ptyr_pPase"/>
</dbReference>
<dbReference type="InterPro" id="IPR036196">
    <property type="entry name" value="Ptyr_pPase_sf"/>
</dbReference>
<dbReference type="InterPro" id="IPR017867">
    <property type="entry name" value="Tyr_phospatase_low_mol_wt"/>
</dbReference>
<dbReference type="NCBIfam" id="NF007520">
    <property type="entry name" value="PRK10126.1"/>
    <property type="match status" value="1"/>
</dbReference>
<dbReference type="PANTHER" id="PTHR11717">
    <property type="entry name" value="LOW MOLECULAR WEIGHT PROTEIN TYROSINE PHOSPHATASE"/>
    <property type="match status" value="1"/>
</dbReference>
<dbReference type="PANTHER" id="PTHR11717:SF31">
    <property type="entry name" value="LOW MOLECULAR WEIGHT PROTEIN-TYROSINE-PHOSPHATASE ETP-RELATED"/>
    <property type="match status" value="1"/>
</dbReference>
<dbReference type="Pfam" id="PF01451">
    <property type="entry name" value="LMWPc"/>
    <property type="match status" value="1"/>
</dbReference>
<dbReference type="PRINTS" id="PR00719">
    <property type="entry name" value="LMWPTPASE"/>
</dbReference>
<dbReference type="SMART" id="SM00226">
    <property type="entry name" value="LMWPc"/>
    <property type="match status" value="1"/>
</dbReference>
<dbReference type="SUPFAM" id="SSF52788">
    <property type="entry name" value="Phosphotyrosine protein phosphatases I"/>
    <property type="match status" value="1"/>
</dbReference>
<sequence>MFNKILVVCVGNVCRSPTAERLLKRFHPSLTVASAGLGALVGKGADPAAASVASAHDLSLENHCARQISARLCREYDLILTMEKRHIAALCDIAPEMRSKVMLFGHWDSEREIPDPYRKSRDAFEAVYTLLERSARQWAQALNAEQGKP</sequence>
<proteinExistence type="inferred from homology"/>
<evidence type="ECO:0000250" key="1">
    <source>
        <dbReference type="UniProtKB" id="P0AAB2"/>
    </source>
</evidence>
<evidence type="ECO:0000250" key="2">
    <source>
        <dbReference type="UniProtKB" id="P11064"/>
    </source>
</evidence>
<evidence type="ECO:0000305" key="3"/>